<protein>
    <recommendedName>
        <fullName>Serine/threonine/tyrosine-interacting-like protein 2</fullName>
    </recommendedName>
    <alternativeName>
        <fullName evidence="6">Inactive dual specificity phosphatase 27</fullName>
    </alternativeName>
</protein>
<name>STYL2_HUMAN</name>
<comment type="function">
    <text evidence="1">May be required for myofiber maturation.</text>
</comment>
<comment type="subcellular location">
    <subcellularLocation>
        <location evidence="1">Cytoplasm</location>
        <location evidence="1">Myofibril</location>
        <location evidence="1">Sarcomere</location>
    </subcellularLocation>
</comment>
<comment type="similarity">
    <text evidence="6">Belongs to the protein-tyrosine phosphatase family. Non-receptor class dual specificity subfamily.</text>
</comment>
<comment type="caution">
    <text evidence="6">Ser-225 is present instead of the conserved Cys which is expected to be an active site residue suggesting that this protein has lost its phosphatase activity.</text>
</comment>
<comment type="sequence caution" evidence="6">
    <conflict type="erroneous initiation">
        <sequence resource="EMBL-CDS" id="AAK02011"/>
    </conflict>
    <text>Extended N-terminus.</text>
</comment>
<accession>Q5VZP5</accession>
<accession>A0AUM4</accession>
<accession>Q9C074</accession>
<feature type="chain" id="PRO_0000302838" description="Serine/threonine/tyrosine-interacting-like protein 2">
    <location>
        <begin position="1"/>
        <end position="1158"/>
    </location>
</feature>
<feature type="domain" description="Tyrosine-protein phosphatase" evidence="3">
    <location>
        <begin position="132"/>
        <end position="280"/>
    </location>
</feature>
<feature type="region of interest" description="Disordered" evidence="4">
    <location>
        <begin position="1"/>
        <end position="21"/>
    </location>
</feature>
<feature type="region of interest" description="Disordered" evidence="4">
    <location>
        <begin position="280"/>
        <end position="303"/>
    </location>
</feature>
<feature type="region of interest" description="Disordered" evidence="4">
    <location>
        <begin position="315"/>
        <end position="337"/>
    </location>
</feature>
<feature type="region of interest" description="Disordered" evidence="4">
    <location>
        <begin position="360"/>
        <end position="392"/>
    </location>
</feature>
<feature type="region of interest" description="Disordered" evidence="4">
    <location>
        <begin position="407"/>
        <end position="444"/>
    </location>
</feature>
<feature type="region of interest" description="Disordered" evidence="4">
    <location>
        <begin position="492"/>
        <end position="527"/>
    </location>
</feature>
<feature type="region of interest" description="Disordered" evidence="4">
    <location>
        <begin position="559"/>
        <end position="582"/>
    </location>
</feature>
<feature type="region of interest" description="Disordered" evidence="4">
    <location>
        <begin position="597"/>
        <end position="622"/>
    </location>
</feature>
<feature type="region of interest" description="Disordered" evidence="4">
    <location>
        <begin position="873"/>
        <end position="915"/>
    </location>
</feature>
<feature type="region of interest" description="Disordered" evidence="4">
    <location>
        <begin position="940"/>
        <end position="1135"/>
    </location>
</feature>
<feature type="compositionally biased region" description="Acidic residues" evidence="4">
    <location>
        <begin position="8"/>
        <end position="19"/>
    </location>
</feature>
<feature type="compositionally biased region" description="Polar residues" evidence="4">
    <location>
        <begin position="322"/>
        <end position="337"/>
    </location>
</feature>
<feature type="compositionally biased region" description="Low complexity" evidence="4">
    <location>
        <begin position="435"/>
        <end position="444"/>
    </location>
</feature>
<feature type="compositionally biased region" description="Basic and acidic residues" evidence="4">
    <location>
        <begin position="500"/>
        <end position="517"/>
    </location>
</feature>
<feature type="compositionally biased region" description="Basic and acidic residues" evidence="4">
    <location>
        <begin position="600"/>
        <end position="619"/>
    </location>
</feature>
<feature type="compositionally biased region" description="Acidic residues" evidence="4">
    <location>
        <begin position="877"/>
        <end position="890"/>
    </location>
</feature>
<feature type="compositionally biased region" description="Polar residues" evidence="4">
    <location>
        <begin position="897"/>
        <end position="914"/>
    </location>
</feature>
<feature type="compositionally biased region" description="Polar residues" evidence="4">
    <location>
        <begin position="952"/>
        <end position="966"/>
    </location>
</feature>
<feature type="compositionally biased region" description="Low complexity" evidence="4">
    <location>
        <begin position="974"/>
        <end position="983"/>
    </location>
</feature>
<feature type="compositionally biased region" description="Polar residues" evidence="4">
    <location>
        <begin position="990"/>
        <end position="999"/>
    </location>
</feature>
<feature type="compositionally biased region" description="Low complexity" evidence="4">
    <location>
        <begin position="1000"/>
        <end position="1012"/>
    </location>
</feature>
<feature type="compositionally biased region" description="Basic and acidic residues" evidence="4">
    <location>
        <begin position="1044"/>
        <end position="1056"/>
    </location>
</feature>
<feature type="compositionally biased region" description="Basic and acidic residues" evidence="4">
    <location>
        <begin position="1064"/>
        <end position="1079"/>
    </location>
</feature>
<feature type="compositionally biased region" description="Basic and acidic residues" evidence="4">
    <location>
        <begin position="1094"/>
        <end position="1111"/>
    </location>
</feature>
<feature type="compositionally biased region" description="Acidic residues" evidence="4">
    <location>
        <begin position="1126"/>
        <end position="1135"/>
    </location>
</feature>
<feature type="modified residue" description="Phosphoserine" evidence="2">
    <location>
        <position position="377"/>
    </location>
</feature>
<feature type="modified residue" description="Phosphothreonine" evidence="2">
    <location>
        <position position="433"/>
    </location>
</feature>
<feature type="modified residue" description="Phosphoserine" evidence="2">
    <location>
        <position position="509"/>
    </location>
</feature>
<feature type="modified residue" description="Phosphoserine" evidence="2">
    <location>
        <position position="985"/>
    </location>
</feature>
<feature type="modified residue" description="Phosphoserine" evidence="2">
    <location>
        <position position="1036"/>
    </location>
</feature>
<feature type="sequence variant" id="VAR_034964" description="In dbSNP:rs267745." evidence="5">
    <original>E</original>
    <variation>D</variation>
    <location>
        <position position="265"/>
    </location>
</feature>
<feature type="sequence variant" id="VAR_034965" description="In dbSNP:rs6668826.">
    <original>R</original>
    <variation>H</variation>
    <location>
        <position position="466"/>
    </location>
</feature>
<feature type="sequence variant" id="VAR_034966" description="In dbSNP:rs3795605.">
    <original>A</original>
    <variation>T</variation>
    <location>
        <position position="505"/>
    </location>
</feature>
<feature type="sequence variant" id="VAR_034967" description="In dbSNP:rs267746." evidence="5">
    <original>K</original>
    <variation>Q</variation>
    <location>
        <position position="855"/>
    </location>
</feature>
<feature type="sequence variant" id="VAR_034968" description="In dbSNP:rs2281959.">
    <original>T</original>
    <variation>N</variation>
    <location>
        <position position="1124"/>
    </location>
</feature>
<dbReference type="EMBL" id="AL158837">
    <property type="status" value="NOT_ANNOTATED_CDS"/>
    <property type="molecule type" value="Genomic_DNA"/>
</dbReference>
<dbReference type="EMBL" id="BC115387">
    <property type="protein sequence ID" value="AAI15388.1"/>
    <property type="molecule type" value="mRNA"/>
</dbReference>
<dbReference type="EMBL" id="AF119045">
    <property type="protein sequence ID" value="AAK02011.1"/>
    <property type="status" value="ALT_INIT"/>
    <property type="molecule type" value="mRNA"/>
</dbReference>
<dbReference type="CCDS" id="CCDS30932.1"/>
<dbReference type="RefSeq" id="NP_001073895.1">
    <property type="nucleotide sequence ID" value="NM_001080426.3"/>
</dbReference>
<dbReference type="SMR" id="Q5VZP5"/>
<dbReference type="BioGRID" id="124920">
    <property type="interactions" value="4"/>
</dbReference>
<dbReference type="FunCoup" id="Q5VZP5">
    <property type="interactions" value="282"/>
</dbReference>
<dbReference type="IntAct" id="Q5VZP5">
    <property type="interactions" value="1"/>
</dbReference>
<dbReference type="STRING" id="9606.ENSP00000354483"/>
<dbReference type="DEPOD" id="DUSP27"/>
<dbReference type="iPTMnet" id="Q5VZP5"/>
<dbReference type="PhosphoSitePlus" id="Q5VZP5"/>
<dbReference type="BioMuta" id="DUSP27"/>
<dbReference type="DMDM" id="74747829"/>
<dbReference type="jPOST" id="Q5VZP5"/>
<dbReference type="MassIVE" id="Q5VZP5"/>
<dbReference type="PaxDb" id="9606-ENSP00000354483"/>
<dbReference type="PeptideAtlas" id="Q5VZP5"/>
<dbReference type="ProteomicsDB" id="65715"/>
<dbReference type="Antibodypedia" id="2486">
    <property type="antibodies" value="18 antibodies from 10 providers"/>
</dbReference>
<dbReference type="DNASU" id="92235"/>
<dbReference type="Ensembl" id="ENST00000271385.9">
    <property type="protein sequence ID" value="ENSP00000271385.5"/>
    <property type="gene ID" value="ENSG00000198842.10"/>
</dbReference>
<dbReference type="Ensembl" id="ENST00000361200.7">
    <property type="protein sequence ID" value="ENSP00000354483.2"/>
    <property type="gene ID" value="ENSG00000198842.10"/>
</dbReference>
<dbReference type="Ensembl" id="ENST00000443333.1">
    <property type="protein sequence ID" value="ENSP00000404874.1"/>
    <property type="gene ID" value="ENSG00000198842.10"/>
</dbReference>
<dbReference type="GeneID" id="92235"/>
<dbReference type="KEGG" id="hsa:92235"/>
<dbReference type="MANE-Select" id="ENST00000361200.7">
    <property type="protein sequence ID" value="ENSP00000354483.2"/>
    <property type="RefSeq nucleotide sequence ID" value="NM_001080426.3"/>
    <property type="RefSeq protein sequence ID" value="NP_001073895.1"/>
</dbReference>
<dbReference type="UCSC" id="uc001geb.2">
    <property type="organism name" value="human"/>
</dbReference>
<dbReference type="AGR" id="HGNC:25034"/>
<dbReference type="CTD" id="92235"/>
<dbReference type="DisGeNET" id="92235"/>
<dbReference type="GeneCards" id="STYXL2"/>
<dbReference type="HGNC" id="HGNC:25034">
    <property type="gene designation" value="STYXL2"/>
</dbReference>
<dbReference type="HPA" id="ENSG00000198842">
    <property type="expression patterns" value="Group enriched (heart muscle, skeletal muscle, tongue)"/>
</dbReference>
<dbReference type="neXtProt" id="NX_Q5VZP5"/>
<dbReference type="OpenTargets" id="ENSG00000198842"/>
<dbReference type="VEuPathDB" id="HostDB:ENSG00000198842"/>
<dbReference type="eggNOG" id="KOG1716">
    <property type="taxonomic scope" value="Eukaryota"/>
</dbReference>
<dbReference type="GeneTree" id="ENSGT00940000159723"/>
<dbReference type="HOGENOM" id="CLU_009343_0_0_1"/>
<dbReference type="InParanoid" id="Q5VZP5"/>
<dbReference type="OMA" id="LSMQTNH"/>
<dbReference type="OrthoDB" id="2017893at2759"/>
<dbReference type="PAN-GO" id="Q5VZP5">
    <property type="GO annotations" value="4 GO annotations based on evolutionary models"/>
</dbReference>
<dbReference type="PhylomeDB" id="Q5VZP5"/>
<dbReference type="TreeFam" id="TF351505"/>
<dbReference type="PathwayCommons" id="Q5VZP5"/>
<dbReference type="SignaLink" id="Q5VZP5"/>
<dbReference type="BioGRID-ORCS" id="92235">
    <property type="hits" value="17 hits in 1148 CRISPR screens"/>
</dbReference>
<dbReference type="ChiTaRS" id="DUSP27">
    <property type="organism name" value="human"/>
</dbReference>
<dbReference type="GenomeRNAi" id="92235"/>
<dbReference type="Pharos" id="Q5VZP5">
    <property type="development level" value="Tdark"/>
</dbReference>
<dbReference type="PRO" id="PR:Q5VZP5"/>
<dbReference type="Proteomes" id="UP000005640">
    <property type="component" value="Chromosome 1"/>
</dbReference>
<dbReference type="RNAct" id="Q5VZP5">
    <property type="molecule type" value="protein"/>
</dbReference>
<dbReference type="Bgee" id="ENSG00000198842">
    <property type="expression patterns" value="Expressed in left ventricle myocardium and 88 other cell types or tissues"/>
</dbReference>
<dbReference type="GO" id="GO:0005737">
    <property type="term" value="C:cytoplasm"/>
    <property type="evidence" value="ECO:0000318"/>
    <property type="project" value="GO_Central"/>
</dbReference>
<dbReference type="GO" id="GO:0030017">
    <property type="term" value="C:sarcomere"/>
    <property type="evidence" value="ECO:0007669"/>
    <property type="project" value="UniProtKB-SubCell"/>
</dbReference>
<dbReference type="GO" id="GO:0033549">
    <property type="term" value="F:MAP kinase phosphatase activity"/>
    <property type="evidence" value="ECO:0000318"/>
    <property type="project" value="GO_Central"/>
</dbReference>
<dbReference type="GO" id="GO:0008138">
    <property type="term" value="F:protein tyrosine/serine/threonine phosphatase activity"/>
    <property type="evidence" value="ECO:0000318"/>
    <property type="project" value="GO_Central"/>
</dbReference>
<dbReference type="GO" id="GO:0043409">
    <property type="term" value="P:negative regulation of MAPK cascade"/>
    <property type="evidence" value="ECO:0000318"/>
    <property type="project" value="GO_Central"/>
</dbReference>
<dbReference type="CDD" id="cd14576">
    <property type="entry name" value="DSP_iDUSP27"/>
    <property type="match status" value="1"/>
</dbReference>
<dbReference type="Gene3D" id="3.90.190.10">
    <property type="entry name" value="Protein tyrosine phosphatase superfamily"/>
    <property type="match status" value="1"/>
</dbReference>
<dbReference type="InterPro" id="IPR020405">
    <property type="entry name" value="Atypical_DUSP_subfamA"/>
</dbReference>
<dbReference type="InterPro" id="IPR000340">
    <property type="entry name" value="Dual-sp_phosphatase_cat-dom"/>
</dbReference>
<dbReference type="InterPro" id="IPR029021">
    <property type="entry name" value="Prot-tyrosine_phosphatase-like"/>
</dbReference>
<dbReference type="InterPro" id="IPR000387">
    <property type="entry name" value="Tyr_Pase_dom"/>
</dbReference>
<dbReference type="InterPro" id="IPR020422">
    <property type="entry name" value="TYR_PHOSPHATASE_DUAL_dom"/>
</dbReference>
<dbReference type="PANTHER" id="PTHR45682">
    <property type="entry name" value="AGAP008228-PA"/>
    <property type="match status" value="1"/>
</dbReference>
<dbReference type="PANTHER" id="PTHR45682:SF4">
    <property type="entry name" value="SERINE_THREONINE_TYROSINE-INTERACTING-LIKE PROTEIN 2"/>
    <property type="match status" value="1"/>
</dbReference>
<dbReference type="Pfam" id="PF00782">
    <property type="entry name" value="DSPc"/>
    <property type="match status" value="1"/>
</dbReference>
<dbReference type="PRINTS" id="PR01908">
    <property type="entry name" value="ADSPHPHTASE"/>
</dbReference>
<dbReference type="PRINTS" id="PR01909">
    <property type="entry name" value="ADSPHPHTASEA"/>
</dbReference>
<dbReference type="SMART" id="SM00195">
    <property type="entry name" value="DSPc"/>
    <property type="match status" value="1"/>
</dbReference>
<dbReference type="SUPFAM" id="SSF52799">
    <property type="entry name" value="(Phosphotyrosine protein) phosphatases II"/>
    <property type="match status" value="1"/>
</dbReference>
<dbReference type="PROSITE" id="PS50056">
    <property type="entry name" value="TYR_PHOSPHATASE_2"/>
    <property type="match status" value="1"/>
</dbReference>
<dbReference type="PROSITE" id="PS50054">
    <property type="entry name" value="TYR_PHOSPHATASE_DUAL"/>
    <property type="match status" value="1"/>
</dbReference>
<proteinExistence type="evidence at protein level"/>
<keyword id="KW-0963">Cytoplasm</keyword>
<keyword id="KW-0597">Phosphoprotein</keyword>
<keyword id="KW-1267">Proteomics identification</keyword>
<keyword id="KW-1185">Reference proteome</keyword>
<sequence>MATRKDTEEEQVVPSEEDEANVRAVQAHYLRSPSPSQYSMVSDAETESIFMEPIHLSSAIAAKQIINEELKPPGVRADAECPGMLESAEQLLVEDLYNRVREKMDDTSLYNTPCVLDLQRALVQDRQEAPWNEVDEVWPNVFIAEKSVAVNKGRLKRLGITHILNAAHGTGVYTGPEFYTGLEIQYLGVEVDDFPEVDISQHFRKASEFLDEALLTYRGKVLVSSEMGISRSAVLVVAYLMIFHNMAILEALMTVRKKRAIYPNEGFLKQLRELNEKLMEEREEDYGREGGSAEAEEGEGTGSMLGARVHALTVEEEDDSASHLSGSSLGKATQASKPLTLIDEEEEEKLYEQWKKGQGLLSDKVPQDGGGWRSASSGQGGEELEDEDVERIIQEWQSRNERYQAEGYRRWGREEEKEEESDAGSSVGRRRRTLSESSAWESVSSHDIWVLKQQLELNRPDHGRRRRADSMSSESTWDAWNERLLEIEKEASRRYHAKSKREEAADRSSEAGSRVREDDEDSVGSEASSFYNFCSRNKDKLTALERWKIKRIQFGFHKKDLGAGDSSGEPGAEEAVGEKNPSDVSLTAYQAWKLKHQKKVGSENKEEVVELSKGEDSALAKKRQRRLELLERSRQTLEESQSMASWEADSSTASGSIPLSAFWSADPSVSADGDTTSVLSTQSHRSHLSQAASNIAGCSTSNPTTPLPNLPVGPGDTISIASIQNWIANVVSETLAQKQNEMLLLSRSPSVASMKAVPAASCLGDDQVSMLSGHSSSSLGGCLLPQSQARPSSDMQSVLSCNTTLSSPAESCRSKVRGTSKPIFSLFADNVDLKELGRKEKEMQMELREKMSEYKMEKLASDNKRSSLFKKKKVKEDEDDGVGDGDEDTDSAIGSFRYSSRSNSQKPETDTCSSLAVCDHYASGSRVGKEMDSSINKWLSGLRTEEKPPFQSDWSGSSRGKYTRSSLLRETESKSSSYKFSKSQSEEQDTSSYHEANGNSVRSTSRFSSSSTREGREMHKFSRSTYNETSSSREESPEPYFFRRTPESSEREESPEPQRPNWARSRDWEDVEESSKSDFSEFGAKRKFTQSFMRSEEEGEKERTENREEGRFASGRRSQYRRSTDREEEEEMDDEAIIAAWRRRQEETRTKLQKRRED</sequence>
<organism>
    <name type="scientific">Homo sapiens</name>
    <name type="common">Human</name>
    <dbReference type="NCBI Taxonomy" id="9606"/>
    <lineage>
        <taxon>Eukaryota</taxon>
        <taxon>Metazoa</taxon>
        <taxon>Chordata</taxon>
        <taxon>Craniata</taxon>
        <taxon>Vertebrata</taxon>
        <taxon>Euteleostomi</taxon>
        <taxon>Mammalia</taxon>
        <taxon>Eutheria</taxon>
        <taxon>Euarchontoglires</taxon>
        <taxon>Primates</taxon>
        <taxon>Haplorrhini</taxon>
        <taxon>Catarrhini</taxon>
        <taxon>Hominidae</taxon>
        <taxon>Homo</taxon>
    </lineage>
</organism>
<reference key="1">
    <citation type="journal article" date="2006" name="Nature">
        <title>The DNA sequence and biological annotation of human chromosome 1.</title>
        <authorList>
            <person name="Gregory S.G."/>
            <person name="Barlow K.F."/>
            <person name="McLay K.E."/>
            <person name="Kaul R."/>
            <person name="Swarbreck D."/>
            <person name="Dunham A."/>
            <person name="Scott C.E."/>
            <person name="Howe K.L."/>
            <person name="Woodfine K."/>
            <person name="Spencer C.C.A."/>
            <person name="Jones M.C."/>
            <person name="Gillson C."/>
            <person name="Searle S."/>
            <person name="Zhou Y."/>
            <person name="Kokocinski F."/>
            <person name="McDonald L."/>
            <person name="Evans R."/>
            <person name="Phillips K."/>
            <person name="Atkinson A."/>
            <person name="Cooper R."/>
            <person name="Jones C."/>
            <person name="Hall R.E."/>
            <person name="Andrews T.D."/>
            <person name="Lloyd C."/>
            <person name="Ainscough R."/>
            <person name="Almeida J.P."/>
            <person name="Ambrose K.D."/>
            <person name="Anderson F."/>
            <person name="Andrew R.W."/>
            <person name="Ashwell R.I.S."/>
            <person name="Aubin K."/>
            <person name="Babbage A.K."/>
            <person name="Bagguley C.L."/>
            <person name="Bailey J."/>
            <person name="Beasley H."/>
            <person name="Bethel G."/>
            <person name="Bird C.P."/>
            <person name="Bray-Allen S."/>
            <person name="Brown J.Y."/>
            <person name="Brown A.J."/>
            <person name="Buckley D."/>
            <person name="Burton J."/>
            <person name="Bye J."/>
            <person name="Carder C."/>
            <person name="Chapman J.C."/>
            <person name="Clark S.Y."/>
            <person name="Clarke G."/>
            <person name="Clee C."/>
            <person name="Cobley V."/>
            <person name="Collier R.E."/>
            <person name="Corby N."/>
            <person name="Coville G.J."/>
            <person name="Davies J."/>
            <person name="Deadman R."/>
            <person name="Dunn M."/>
            <person name="Earthrowl M."/>
            <person name="Ellington A.G."/>
            <person name="Errington H."/>
            <person name="Frankish A."/>
            <person name="Frankland J."/>
            <person name="French L."/>
            <person name="Garner P."/>
            <person name="Garnett J."/>
            <person name="Gay L."/>
            <person name="Ghori M.R.J."/>
            <person name="Gibson R."/>
            <person name="Gilby L.M."/>
            <person name="Gillett W."/>
            <person name="Glithero R.J."/>
            <person name="Grafham D.V."/>
            <person name="Griffiths C."/>
            <person name="Griffiths-Jones S."/>
            <person name="Grocock R."/>
            <person name="Hammond S."/>
            <person name="Harrison E.S.I."/>
            <person name="Hart E."/>
            <person name="Haugen E."/>
            <person name="Heath P.D."/>
            <person name="Holmes S."/>
            <person name="Holt K."/>
            <person name="Howden P.J."/>
            <person name="Hunt A.R."/>
            <person name="Hunt S.E."/>
            <person name="Hunter G."/>
            <person name="Isherwood J."/>
            <person name="James R."/>
            <person name="Johnson C."/>
            <person name="Johnson D."/>
            <person name="Joy A."/>
            <person name="Kay M."/>
            <person name="Kershaw J.K."/>
            <person name="Kibukawa M."/>
            <person name="Kimberley A.M."/>
            <person name="King A."/>
            <person name="Knights A.J."/>
            <person name="Lad H."/>
            <person name="Laird G."/>
            <person name="Lawlor S."/>
            <person name="Leongamornlert D.A."/>
            <person name="Lloyd D.M."/>
            <person name="Loveland J."/>
            <person name="Lovell J."/>
            <person name="Lush M.J."/>
            <person name="Lyne R."/>
            <person name="Martin S."/>
            <person name="Mashreghi-Mohammadi M."/>
            <person name="Matthews L."/>
            <person name="Matthews N.S.W."/>
            <person name="McLaren S."/>
            <person name="Milne S."/>
            <person name="Mistry S."/>
            <person name="Moore M.J.F."/>
            <person name="Nickerson T."/>
            <person name="O'Dell C.N."/>
            <person name="Oliver K."/>
            <person name="Palmeiri A."/>
            <person name="Palmer S.A."/>
            <person name="Parker A."/>
            <person name="Patel D."/>
            <person name="Pearce A.V."/>
            <person name="Peck A.I."/>
            <person name="Pelan S."/>
            <person name="Phelps K."/>
            <person name="Phillimore B.J."/>
            <person name="Plumb R."/>
            <person name="Rajan J."/>
            <person name="Raymond C."/>
            <person name="Rouse G."/>
            <person name="Saenphimmachak C."/>
            <person name="Sehra H.K."/>
            <person name="Sheridan E."/>
            <person name="Shownkeen R."/>
            <person name="Sims S."/>
            <person name="Skuce C.D."/>
            <person name="Smith M."/>
            <person name="Steward C."/>
            <person name="Subramanian S."/>
            <person name="Sycamore N."/>
            <person name="Tracey A."/>
            <person name="Tromans A."/>
            <person name="Van Helmond Z."/>
            <person name="Wall M."/>
            <person name="Wallis J.M."/>
            <person name="White S."/>
            <person name="Whitehead S.L."/>
            <person name="Wilkinson J.E."/>
            <person name="Willey D.L."/>
            <person name="Williams H."/>
            <person name="Wilming L."/>
            <person name="Wray P.W."/>
            <person name="Wu Z."/>
            <person name="Coulson A."/>
            <person name="Vaudin M."/>
            <person name="Sulston J.E."/>
            <person name="Durbin R.M."/>
            <person name="Hubbard T."/>
            <person name="Wooster R."/>
            <person name="Dunham I."/>
            <person name="Carter N.P."/>
            <person name="McVean G."/>
            <person name="Ross M.T."/>
            <person name="Harrow J."/>
            <person name="Olson M.V."/>
            <person name="Beck S."/>
            <person name="Rogers J."/>
            <person name="Bentley D.R."/>
        </authorList>
    </citation>
    <scope>NUCLEOTIDE SEQUENCE [LARGE SCALE GENOMIC DNA]</scope>
</reference>
<reference key="2">
    <citation type="journal article" date="2004" name="Genome Res.">
        <title>The status, quality, and expansion of the NIH full-length cDNA project: the Mammalian Gene Collection (MGC).</title>
        <authorList>
            <consortium name="The MGC Project Team"/>
        </authorList>
    </citation>
    <scope>NUCLEOTIDE SEQUENCE [LARGE SCALE MRNA] OF 1-1157</scope>
    <scope>VARIANTS ASP-265 AND GLN-855</scope>
</reference>
<reference key="3">
    <citation type="submission" date="1999-01" db="EMBL/GenBank/DDBJ databases">
        <title>Isolation of a novel gene preferably expressed in cardiac and skeletal muscles by mRNA differential display.</title>
        <authorList>
            <person name="Li D.X."/>
            <person name="Bachinski L.L."/>
            <person name="Shaffer L."/>
            <person name="Roberts R."/>
        </authorList>
    </citation>
    <scope>NUCLEOTIDE SEQUENCE [MRNA] OF 501-1158</scope>
</reference>
<gene>
    <name evidence="7" type="primary">STYXL2</name>
    <name type="synonym">DUSP27</name>
</gene>
<evidence type="ECO:0000250" key="1">
    <source>
        <dbReference type="UniProtKB" id="F1QWM2"/>
    </source>
</evidence>
<evidence type="ECO:0000250" key="2">
    <source>
        <dbReference type="UniProtKB" id="Q148W8"/>
    </source>
</evidence>
<evidence type="ECO:0000255" key="3">
    <source>
        <dbReference type="PROSITE-ProRule" id="PRU00160"/>
    </source>
</evidence>
<evidence type="ECO:0000256" key="4">
    <source>
        <dbReference type="SAM" id="MobiDB-lite"/>
    </source>
</evidence>
<evidence type="ECO:0000269" key="5">
    <source>
    </source>
</evidence>
<evidence type="ECO:0000305" key="6"/>
<evidence type="ECO:0000312" key="7">
    <source>
        <dbReference type="HGNC" id="HGNC:25034"/>
    </source>
</evidence>